<protein>
    <recommendedName>
        <fullName evidence="1">DNA ligase</fullName>
        <ecNumber evidence="1">6.5.1.2</ecNumber>
    </recommendedName>
    <alternativeName>
        <fullName evidence="1">Polydeoxyribonucleotide synthase [NAD(+)]</fullName>
    </alternativeName>
</protein>
<accession>B7J653</accession>
<gene>
    <name evidence="1" type="primary">ligA</name>
    <name type="ordered locus">AFE_0757</name>
</gene>
<comment type="function">
    <text evidence="1">DNA ligase that catalyzes the formation of phosphodiester linkages between 5'-phosphoryl and 3'-hydroxyl groups in double-stranded DNA using NAD as a coenzyme and as the energy source for the reaction. It is essential for DNA replication and repair of damaged DNA.</text>
</comment>
<comment type="catalytic activity">
    <reaction evidence="1">
        <text>NAD(+) + (deoxyribonucleotide)n-3'-hydroxyl + 5'-phospho-(deoxyribonucleotide)m = (deoxyribonucleotide)n+m + AMP + beta-nicotinamide D-nucleotide.</text>
        <dbReference type="EC" id="6.5.1.2"/>
    </reaction>
</comment>
<comment type="cofactor">
    <cofactor evidence="1">
        <name>Mg(2+)</name>
        <dbReference type="ChEBI" id="CHEBI:18420"/>
    </cofactor>
    <cofactor evidence="1">
        <name>Mn(2+)</name>
        <dbReference type="ChEBI" id="CHEBI:29035"/>
    </cofactor>
</comment>
<comment type="similarity">
    <text evidence="1">Belongs to the NAD-dependent DNA ligase family. LigA subfamily.</text>
</comment>
<organism>
    <name type="scientific">Acidithiobacillus ferrooxidans (strain ATCC 23270 / DSM 14882 / CIP 104768 / NCIMB 8455)</name>
    <name type="common">Ferrobacillus ferrooxidans (strain ATCC 23270)</name>
    <dbReference type="NCBI Taxonomy" id="243159"/>
    <lineage>
        <taxon>Bacteria</taxon>
        <taxon>Pseudomonadati</taxon>
        <taxon>Pseudomonadota</taxon>
        <taxon>Acidithiobacillia</taxon>
        <taxon>Acidithiobacillales</taxon>
        <taxon>Acidithiobacillaceae</taxon>
        <taxon>Acidithiobacillus</taxon>
    </lineage>
</organism>
<proteinExistence type="inferred from homology"/>
<dbReference type="EC" id="6.5.1.2" evidence="1"/>
<dbReference type="EMBL" id="CP001219">
    <property type="protein sequence ID" value="ACK79541.1"/>
    <property type="molecule type" value="Genomic_DNA"/>
</dbReference>
<dbReference type="RefSeq" id="WP_012536336.1">
    <property type="nucleotide sequence ID" value="NC_011761.1"/>
</dbReference>
<dbReference type="SMR" id="B7J653"/>
<dbReference type="STRING" id="243159.AFE_0757"/>
<dbReference type="PaxDb" id="243159-AFE_0757"/>
<dbReference type="GeneID" id="65280102"/>
<dbReference type="KEGG" id="afr:AFE_0757"/>
<dbReference type="eggNOG" id="COG0272">
    <property type="taxonomic scope" value="Bacteria"/>
</dbReference>
<dbReference type="HOGENOM" id="CLU_007764_2_1_6"/>
<dbReference type="Proteomes" id="UP000001362">
    <property type="component" value="Chromosome"/>
</dbReference>
<dbReference type="GO" id="GO:0005829">
    <property type="term" value="C:cytosol"/>
    <property type="evidence" value="ECO:0007669"/>
    <property type="project" value="TreeGrafter"/>
</dbReference>
<dbReference type="GO" id="GO:0003677">
    <property type="term" value="F:DNA binding"/>
    <property type="evidence" value="ECO:0007669"/>
    <property type="project" value="InterPro"/>
</dbReference>
<dbReference type="GO" id="GO:0003911">
    <property type="term" value="F:DNA ligase (NAD+) activity"/>
    <property type="evidence" value="ECO:0007669"/>
    <property type="project" value="UniProtKB-UniRule"/>
</dbReference>
<dbReference type="GO" id="GO:0046872">
    <property type="term" value="F:metal ion binding"/>
    <property type="evidence" value="ECO:0007669"/>
    <property type="project" value="UniProtKB-KW"/>
</dbReference>
<dbReference type="GO" id="GO:0006281">
    <property type="term" value="P:DNA repair"/>
    <property type="evidence" value="ECO:0007669"/>
    <property type="project" value="UniProtKB-KW"/>
</dbReference>
<dbReference type="GO" id="GO:0006260">
    <property type="term" value="P:DNA replication"/>
    <property type="evidence" value="ECO:0007669"/>
    <property type="project" value="UniProtKB-KW"/>
</dbReference>
<dbReference type="CDD" id="cd17748">
    <property type="entry name" value="BRCT_DNA_ligase_like"/>
    <property type="match status" value="1"/>
</dbReference>
<dbReference type="CDD" id="cd00114">
    <property type="entry name" value="LIGANc"/>
    <property type="match status" value="1"/>
</dbReference>
<dbReference type="FunFam" id="1.10.150.20:FF:000006">
    <property type="entry name" value="DNA ligase"/>
    <property type="match status" value="1"/>
</dbReference>
<dbReference type="FunFam" id="1.10.150.20:FF:000007">
    <property type="entry name" value="DNA ligase"/>
    <property type="match status" value="1"/>
</dbReference>
<dbReference type="FunFam" id="2.40.50.140:FF:000012">
    <property type="entry name" value="DNA ligase"/>
    <property type="match status" value="1"/>
</dbReference>
<dbReference type="FunFam" id="3.30.470.30:FF:000001">
    <property type="entry name" value="DNA ligase"/>
    <property type="match status" value="1"/>
</dbReference>
<dbReference type="Gene3D" id="6.20.10.30">
    <property type="match status" value="1"/>
</dbReference>
<dbReference type="Gene3D" id="1.10.150.20">
    <property type="entry name" value="5' to 3' exonuclease, C-terminal subdomain"/>
    <property type="match status" value="2"/>
</dbReference>
<dbReference type="Gene3D" id="3.40.50.10190">
    <property type="entry name" value="BRCT domain"/>
    <property type="match status" value="1"/>
</dbReference>
<dbReference type="Gene3D" id="3.30.470.30">
    <property type="entry name" value="DNA ligase/mRNA capping enzyme"/>
    <property type="match status" value="1"/>
</dbReference>
<dbReference type="Gene3D" id="1.10.287.610">
    <property type="entry name" value="Helix hairpin bin"/>
    <property type="match status" value="1"/>
</dbReference>
<dbReference type="Gene3D" id="2.40.50.140">
    <property type="entry name" value="Nucleic acid-binding proteins"/>
    <property type="match status" value="1"/>
</dbReference>
<dbReference type="HAMAP" id="MF_01588">
    <property type="entry name" value="DNA_ligase_A"/>
    <property type="match status" value="1"/>
</dbReference>
<dbReference type="InterPro" id="IPR001357">
    <property type="entry name" value="BRCT_dom"/>
</dbReference>
<dbReference type="InterPro" id="IPR036420">
    <property type="entry name" value="BRCT_dom_sf"/>
</dbReference>
<dbReference type="InterPro" id="IPR041663">
    <property type="entry name" value="DisA/LigA_HHH"/>
</dbReference>
<dbReference type="InterPro" id="IPR001679">
    <property type="entry name" value="DNA_ligase"/>
</dbReference>
<dbReference type="InterPro" id="IPR018239">
    <property type="entry name" value="DNA_ligase_AS"/>
</dbReference>
<dbReference type="InterPro" id="IPR033136">
    <property type="entry name" value="DNA_ligase_CS"/>
</dbReference>
<dbReference type="InterPro" id="IPR013839">
    <property type="entry name" value="DNAligase_adenylation"/>
</dbReference>
<dbReference type="InterPro" id="IPR013840">
    <property type="entry name" value="DNAligase_N"/>
</dbReference>
<dbReference type="InterPro" id="IPR003583">
    <property type="entry name" value="Hlx-hairpin-Hlx_DNA-bd_motif"/>
</dbReference>
<dbReference type="InterPro" id="IPR012340">
    <property type="entry name" value="NA-bd_OB-fold"/>
</dbReference>
<dbReference type="InterPro" id="IPR004150">
    <property type="entry name" value="NAD_DNA_ligase_OB"/>
</dbReference>
<dbReference type="InterPro" id="IPR010994">
    <property type="entry name" value="RuvA_2-like"/>
</dbReference>
<dbReference type="InterPro" id="IPR004149">
    <property type="entry name" value="Znf_DNAligase_C4"/>
</dbReference>
<dbReference type="NCBIfam" id="TIGR00575">
    <property type="entry name" value="dnlj"/>
    <property type="match status" value="1"/>
</dbReference>
<dbReference type="NCBIfam" id="NF005932">
    <property type="entry name" value="PRK07956.1"/>
    <property type="match status" value="1"/>
</dbReference>
<dbReference type="PANTHER" id="PTHR23389">
    <property type="entry name" value="CHROMOSOME TRANSMISSION FIDELITY FACTOR 18"/>
    <property type="match status" value="1"/>
</dbReference>
<dbReference type="PANTHER" id="PTHR23389:SF9">
    <property type="entry name" value="DNA LIGASE"/>
    <property type="match status" value="1"/>
</dbReference>
<dbReference type="Pfam" id="PF00533">
    <property type="entry name" value="BRCT"/>
    <property type="match status" value="1"/>
</dbReference>
<dbReference type="Pfam" id="PF01653">
    <property type="entry name" value="DNA_ligase_aden"/>
    <property type="match status" value="1"/>
</dbReference>
<dbReference type="Pfam" id="PF03120">
    <property type="entry name" value="DNA_ligase_OB"/>
    <property type="match status" value="1"/>
</dbReference>
<dbReference type="Pfam" id="PF03119">
    <property type="entry name" value="DNA_ligase_ZBD"/>
    <property type="match status" value="1"/>
</dbReference>
<dbReference type="Pfam" id="PF12826">
    <property type="entry name" value="HHH_2"/>
    <property type="match status" value="1"/>
</dbReference>
<dbReference type="Pfam" id="PF14520">
    <property type="entry name" value="HHH_5"/>
    <property type="match status" value="1"/>
</dbReference>
<dbReference type="Pfam" id="PF22745">
    <property type="entry name" value="Nlig-Ia"/>
    <property type="match status" value="1"/>
</dbReference>
<dbReference type="PIRSF" id="PIRSF001604">
    <property type="entry name" value="LigA"/>
    <property type="match status" value="1"/>
</dbReference>
<dbReference type="SMART" id="SM00292">
    <property type="entry name" value="BRCT"/>
    <property type="match status" value="1"/>
</dbReference>
<dbReference type="SMART" id="SM00278">
    <property type="entry name" value="HhH1"/>
    <property type="match status" value="4"/>
</dbReference>
<dbReference type="SMART" id="SM00532">
    <property type="entry name" value="LIGANc"/>
    <property type="match status" value="1"/>
</dbReference>
<dbReference type="SUPFAM" id="SSF52113">
    <property type="entry name" value="BRCT domain"/>
    <property type="match status" value="1"/>
</dbReference>
<dbReference type="SUPFAM" id="SSF56091">
    <property type="entry name" value="DNA ligase/mRNA capping enzyme, catalytic domain"/>
    <property type="match status" value="1"/>
</dbReference>
<dbReference type="SUPFAM" id="SSF50249">
    <property type="entry name" value="Nucleic acid-binding proteins"/>
    <property type="match status" value="1"/>
</dbReference>
<dbReference type="SUPFAM" id="SSF47781">
    <property type="entry name" value="RuvA domain 2-like"/>
    <property type="match status" value="1"/>
</dbReference>
<dbReference type="PROSITE" id="PS50172">
    <property type="entry name" value="BRCT"/>
    <property type="match status" value="1"/>
</dbReference>
<dbReference type="PROSITE" id="PS01055">
    <property type="entry name" value="DNA_LIGASE_N1"/>
    <property type="match status" value="1"/>
</dbReference>
<dbReference type="PROSITE" id="PS01056">
    <property type="entry name" value="DNA_LIGASE_N2"/>
    <property type="match status" value="1"/>
</dbReference>
<keyword id="KW-0227">DNA damage</keyword>
<keyword id="KW-0234">DNA repair</keyword>
<keyword id="KW-0235">DNA replication</keyword>
<keyword id="KW-0436">Ligase</keyword>
<keyword id="KW-0460">Magnesium</keyword>
<keyword id="KW-0464">Manganese</keyword>
<keyword id="KW-0479">Metal-binding</keyword>
<keyword id="KW-0520">NAD</keyword>
<keyword id="KW-1185">Reference proteome</keyword>
<keyword id="KW-0862">Zinc</keyword>
<reference key="1">
    <citation type="journal article" date="2008" name="BMC Genomics">
        <title>Acidithiobacillus ferrooxidans metabolism: from genome sequence to industrial applications.</title>
        <authorList>
            <person name="Valdes J."/>
            <person name="Pedroso I."/>
            <person name="Quatrini R."/>
            <person name="Dodson R.J."/>
            <person name="Tettelin H."/>
            <person name="Blake R. II"/>
            <person name="Eisen J.A."/>
            <person name="Holmes D.S."/>
        </authorList>
    </citation>
    <scope>NUCLEOTIDE SEQUENCE [LARGE SCALE GENOMIC DNA]</scope>
    <source>
        <strain>ATCC 23270 / DSM 14882 / CIP 104768 / NCIMB 8455</strain>
    </source>
</reference>
<name>DNLJ_ACIF2</name>
<sequence length="671" mass="73917">MERVNHTDFERIQQLRAELVAANNAYYREDSPTLSDAEYDARLRELRTLEDRNPQWQSADSPTQRVGAAPVEVFGEVHYAIPLTSLDNVFDQDGFSDWLARVQKGLGREDVPLSAEPKFDGLSVNIRYIEGKLVQAGTRGDGQTGEDVTANVRTIRNVPLQLTGKDWPELLEVRGEVVIPVAAFRRLNGERLRAGDNPFANPRNAAAGSLRQLDSSVTAKRPLAYFPWGWGESSVPLGKSHIAVMERLSAWGFEVTSYLRGVHELTECQRYFSEMQKIREGMPFEIDGLVFKVDDLLAREQLGFTARAPRWAIAYKFPAHEERTVVEDILASVGRTGVITPVAVLKPVQVGGVTVSRASLHNQDEVDRKDIRVGDTVLVRRAGDVIPEVVMVIKEERPPATQPWHMPQRCPVCGSEVLRLANESAHRCMGGLYCPAQRMGAIRHFASRRAMDIRGLGEKLVEQLVGHGLVHTVADIYHLDEAALCGLERMASRSAQKLLAEIDRSRHTSLPRFLYALGIRQVGEGTAKSLAIYFGDLDPLMAATPELLQNIPDVGPIVAESVAHFFAQPHNRDVIAALRAAGVQWAVVQPQKGGRFQGMTLVLTGALDNMTREEAKTAIENAGGKVSGSVSAKTSYVVVGKDPGSKAEKAAKLGVKQLTEAQFLAMFSEKE</sequence>
<evidence type="ECO:0000255" key="1">
    <source>
        <dbReference type="HAMAP-Rule" id="MF_01588"/>
    </source>
</evidence>
<feature type="chain" id="PRO_0000380280" description="DNA ligase">
    <location>
        <begin position="1"/>
        <end position="671"/>
    </location>
</feature>
<feature type="domain" description="BRCT" evidence="1">
    <location>
        <begin position="591"/>
        <end position="671"/>
    </location>
</feature>
<feature type="active site" description="N6-AMP-lysine intermediate" evidence="1">
    <location>
        <position position="118"/>
    </location>
</feature>
<feature type="binding site" evidence="1">
    <location>
        <begin position="36"/>
        <end position="40"/>
    </location>
    <ligand>
        <name>NAD(+)</name>
        <dbReference type="ChEBI" id="CHEBI:57540"/>
    </ligand>
</feature>
<feature type="binding site" evidence="1">
    <location>
        <begin position="85"/>
        <end position="86"/>
    </location>
    <ligand>
        <name>NAD(+)</name>
        <dbReference type="ChEBI" id="CHEBI:57540"/>
    </ligand>
</feature>
<feature type="binding site" evidence="1">
    <location>
        <position position="116"/>
    </location>
    <ligand>
        <name>NAD(+)</name>
        <dbReference type="ChEBI" id="CHEBI:57540"/>
    </ligand>
</feature>
<feature type="binding site" evidence="1">
    <location>
        <position position="139"/>
    </location>
    <ligand>
        <name>NAD(+)</name>
        <dbReference type="ChEBI" id="CHEBI:57540"/>
    </ligand>
</feature>
<feature type="binding site" evidence="1">
    <location>
        <position position="176"/>
    </location>
    <ligand>
        <name>NAD(+)</name>
        <dbReference type="ChEBI" id="CHEBI:57540"/>
    </ligand>
</feature>
<feature type="binding site" evidence="1">
    <location>
        <position position="292"/>
    </location>
    <ligand>
        <name>NAD(+)</name>
        <dbReference type="ChEBI" id="CHEBI:57540"/>
    </ligand>
</feature>
<feature type="binding site" evidence="1">
    <location>
        <position position="316"/>
    </location>
    <ligand>
        <name>NAD(+)</name>
        <dbReference type="ChEBI" id="CHEBI:57540"/>
    </ligand>
</feature>
<feature type="binding site" evidence="1">
    <location>
        <position position="410"/>
    </location>
    <ligand>
        <name>Zn(2+)</name>
        <dbReference type="ChEBI" id="CHEBI:29105"/>
    </ligand>
</feature>
<feature type="binding site" evidence="1">
    <location>
        <position position="413"/>
    </location>
    <ligand>
        <name>Zn(2+)</name>
        <dbReference type="ChEBI" id="CHEBI:29105"/>
    </ligand>
</feature>
<feature type="binding site" evidence="1">
    <location>
        <position position="428"/>
    </location>
    <ligand>
        <name>Zn(2+)</name>
        <dbReference type="ChEBI" id="CHEBI:29105"/>
    </ligand>
</feature>
<feature type="binding site" evidence="1">
    <location>
        <position position="434"/>
    </location>
    <ligand>
        <name>Zn(2+)</name>
        <dbReference type="ChEBI" id="CHEBI:29105"/>
    </ligand>
</feature>